<dbReference type="EMBL" id="Z72391">
    <property type="protein sequence ID" value="CAA96531.1"/>
    <property type="molecule type" value="Genomic_DNA"/>
</dbReference>
<dbReference type="SMR" id="Q26734"/>
<dbReference type="GO" id="GO:0005938">
    <property type="term" value="C:cell cortex"/>
    <property type="evidence" value="ECO:0007669"/>
    <property type="project" value="TreeGrafter"/>
</dbReference>
<dbReference type="GO" id="GO:0097014">
    <property type="term" value="C:ciliary plasm"/>
    <property type="evidence" value="ECO:0000314"/>
    <property type="project" value="GeneDB"/>
</dbReference>
<dbReference type="GO" id="GO:0005737">
    <property type="term" value="C:cytoplasm"/>
    <property type="evidence" value="ECO:0000314"/>
    <property type="project" value="GeneDB"/>
</dbReference>
<dbReference type="GO" id="GO:0005856">
    <property type="term" value="C:cytoskeleton"/>
    <property type="evidence" value="ECO:0007669"/>
    <property type="project" value="UniProtKB-SubCell"/>
</dbReference>
<dbReference type="GO" id="GO:0031981">
    <property type="term" value="C:nuclear lumen"/>
    <property type="evidence" value="ECO:0000314"/>
    <property type="project" value="GeneDB"/>
</dbReference>
<dbReference type="GO" id="GO:0003779">
    <property type="term" value="F:actin binding"/>
    <property type="evidence" value="ECO:0000255"/>
    <property type="project" value="GeneDB"/>
</dbReference>
<dbReference type="GO" id="GO:0003785">
    <property type="term" value="F:actin monomer binding"/>
    <property type="evidence" value="ECO:0007669"/>
    <property type="project" value="TreeGrafter"/>
</dbReference>
<dbReference type="CDD" id="cd00148">
    <property type="entry name" value="PROF"/>
    <property type="match status" value="1"/>
</dbReference>
<dbReference type="FunFam" id="3.30.450.30:FF:000019">
    <property type="entry name" value="Profilin"/>
    <property type="match status" value="1"/>
</dbReference>
<dbReference type="Gene3D" id="3.30.450.30">
    <property type="entry name" value="Dynein light chain 2a, cytoplasmic"/>
    <property type="match status" value="1"/>
</dbReference>
<dbReference type="InterPro" id="IPR048278">
    <property type="entry name" value="PFN"/>
</dbReference>
<dbReference type="InterPro" id="IPR005455">
    <property type="entry name" value="PFN_euk"/>
</dbReference>
<dbReference type="InterPro" id="IPR036140">
    <property type="entry name" value="PFN_sf"/>
</dbReference>
<dbReference type="InterPro" id="IPR027310">
    <property type="entry name" value="Profilin_CS"/>
</dbReference>
<dbReference type="PANTHER" id="PTHR11604">
    <property type="entry name" value="PROFILIN"/>
    <property type="match status" value="1"/>
</dbReference>
<dbReference type="PANTHER" id="PTHR11604:SF0">
    <property type="entry name" value="PROFILIN"/>
    <property type="match status" value="1"/>
</dbReference>
<dbReference type="Pfam" id="PF00235">
    <property type="entry name" value="Profilin"/>
    <property type="match status" value="1"/>
</dbReference>
<dbReference type="SMART" id="SM00392">
    <property type="entry name" value="PROF"/>
    <property type="match status" value="1"/>
</dbReference>
<dbReference type="SUPFAM" id="SSF55770">
    <property type="entry name" value="Profilin (actin-binding protein)"/>
    <property type="match status" value="1"/>
</dbReference>
<dbReference type="PROSITE" id="PS00414">
    <property type="entry name" value="PROFILIN"/>
    <property type="match status" value="1"/>
</dbReference>
<feature type="chain" id="PRO_0000199605" description="Profilin">
    <location>
        <begin position="1"/>
        <end position="150"/>
    </location>
</feature>
<evidence type="ECO:0000250" key="1"/>
<evidence type="ECO:0000305" key="2"/>
<reference key="1">
    <citation type="journal article" date="1997" name="Gene">
        <title>Identification of a profilin homologue in Trypanosoma brucei by complementation screening.</title>
        <authorList>
            <person name="Wilson W."/>
            <person name="Seebeck T."/>
        </authorList>
    </citation>
    <scope>NUCLEOTIDE SEQUENCE [GENOMIC DNA]</scope>
    <source>
        <strain>427</strain>
    </source>
</reference>
<organism>
    <name type="scientific">Trypanosoma brucei brucei</name>
    <dbReference type="NCBI Taxonomy" id="5702"/>
    <lineage>
        <taxon>Eukaryota</taxon>
        <taxon>Discoba</taxon>
        <taxon>Euglenozoa</taxon>
        <taxon>Kinetoplastea</taxon>
        <taxon>Metakinetoplastina</taxon>
        <taxon>Trypanosomatida</taxon>
        <taxon>Trypanosomatidae</taxon>
        <taxon>Trypanosoma</taxon>
    </lineage>
</organism>
<protein>
    <recommendedName>
        <fullName>Profilin</fullName>
    </recommendedName>
</protein>
<sequence length="150" mass="16122">MSWQSYVDDSLVGSGFMHSAAIVGLADGSYWAYGGTYVPQPEEVTHILKCLENFSLVQSSGVTICGVKFFGLQSGSEGQMKYIFFKKGAAGGCIYTSKQTAIIAVYGNPGDASALQQDLQKTEATYVAVNPADCNTTVKRIAEYLISLDY</sequence>
<accession>Q26734</accession>
<proteinExistence type="inferred from homology"/>
<comment type="function">
    <text evidence="1">Binds to actin and affects the structure of the cytoskeleton. At high concentrations, profilin prevents the polymerization of actin, whereas it enhances it at low concentrations. By binding to PIP2, it inhibits the formation of IP3 and DG (By similarity).</text>
</comment>
<comment type="subunit">
    <text>Occurs in many kinds of cells as a complex with monomeric actin in a 1:1 ratio.</text>
</comment>
<comment type="subcellular location">
    <subcellularLocation>
        <location evidence="1">Cytoplasm</location>
        <location evidence="1">Cytoskeleton</location>
    </subcellularLocation>
</comment>
<comment type="similarity">
    <text evidence="2">Belongs to the profilin family.</text>
</comment>
<name>PROF_TRYBB</name>
<keyword id="KW-0009">Actin-binding</keyword>
<keyword id="KW-0963">Cytoplasm</keyword>
<keyword id="KW-0206">Cytoskeleton</keyword>